<feature type="chain" id="PRO_0000409403" description="Tethering factor for nuclear proteasome STS1">
    <location>
        <begin position="1"/>
        <end position="333"/>
    </location>
</feature>
<feature type="region of interest" description="Disordered" evidence="2">
    <location>
        <begin position="1"/>
        <end position="76"/>
    </location>
</feature>
<feature type="compositionally biased region" description="Polar residues" evidence="2">
    <location>
        <begin position="1"/>
        <end position="13"/>
    </location>
</feature>
<feature type="compositionally biased region" description="Low complexity" evidence="2">
    <location>
        <begin position="62"/>
        <end position="76"/>
    </location>
</feature>
<keyword id="KW-0963">Cytoplasm</keyword>
<keyword id="KW-0539">Nucleus</keyword>
<keyword id="KW-0653">Protein transport</keyword>
<keyword id="KW-0813">Transport</keyword>
<sequence>MMSTNFHWPTTNKNDNREVSIETPTSTDPHVPRDSLASMPHATASTTIKKRKRDDELDGDKSTTTTTTTTTVSSSSTRKYLQSSLGSSKFKKAKTPKISGQPLPLPRLIESLDRSNLQKLVQGLIAVHPELQSTLIKISPRPSIQDSIQLLQDKFDMIISHLPYKCDVESDYSYLRIKPHLQEFLSSVSDFILNYLPPLETNMTRSLQFLHEATKLVYNLPNFTNQEFQYTKSTALEQIANCWLIVLSQDEEKDGNTDVVKVIHELELLEKLHEHNEISFNKFEKVVDYCKDKLEQHELIMNNNEAGSGVPSSISDLITVDYSKYSIANTTSI</sequence>
<protein>
    <recommendedName>
        <fullName>Tethering factor for nuclear proteasome STS1</fullName>
    </recommendedName>
</protein>
<organism>
    <name type="scientific">Candida dubliniensis (strain CD36 / ATCC MYA-646 / CBS 7987 / NCPF 3949 / NRRL Y-17841)</name>
    <name type="common">Yeast</name>
    <dbReference type="NCBI Taxonomy" id="573826"/>
    <lineage>
        <taxon>Eukaryota</taxon>
        <taxon>Fungi</taxon>
        <taxon>Dikarya</taxon>
        <taxon>Ascomycota</taxon>
        <taxon>Saccharomycotina</taxon>
        <taxon>Pichiomycetes</taxon>
        <taxon>Debaryomycetaceae</taxon>
        <taxon>Candida/Lodderomyces clade</taxon>
        <taxon>Candida</taxon>
    </lineage>
</organism>
<comment type="function">
    <text evidence="1">Involved in ubiquitin-mediated protein degradation. Regulatory factor in the ubiquitin/proteasome pathway that controls the turnover of proteasome substrates. Targets proteasomes to the nucleus and facilitates the degradation of nuclear proteins (By similarity).</text>
</comment>
<comment type="subunit">
    <text evidence="1">Binds the proteasome.</text>
</comment>
<comment type="subcellular location">
    <subcellularLocation>
        <location evidence="1">Cytoplasm</location>
    </subcellularLocation>
    <subcellularLocation>
        <location evidence="1">Nucleus</location>
    </subcellularLocation>
</comment>
<comment type="similarity">
    <text evidence="3">Belongs to the cut8/STS1 family.</text>
</comment>
<accession>B9W900</accession>
<dbReference type="EMBL" id="FM992688">
    <property type="protein sequence ID" value="CAX45225.1"/>
    <property type="molecule type" value="Genomic_DNA"/>
</dbReference>
<dbReference type="RefSeq" id="XP_002417570.1">
    <property type="nucleotide sequence ID" value="XM_002417525.1"/>
</dbReference>
<dbReference type="SMR" id="B9W900"/>
<dbReference type="GeneID" id="8045117"/>
<dbReference type="KEGG" id="cdu:CD36_09260"/>
<dbReference type="CGD" id="CAL0000162096">
    <property type="gene designation" value="Cd36_09260"/>
</dbReference>
<dbReference type="VEuPathDB" id="FungiDB:CD36_09260"/>
<dbReference type="eggNOG" id="ENOG502RNK4">
    <property type="taxonomic scope" value="Eukaryota"/>
</dbReference>
<dbReference type="HOGENOM" id="CLU_054606_2_0_1"/>
<dbReference type="OrthoDB" id="10061064at2759"/>
<dbReference type="Proteomes" id="UP000002605">
    <property type="component" value="Chromosome 1"/>
</dbReference>
<dbReference type="GO" id="GO:0005737">
    <property type="term" value="C:cytoplasm"/>
    <property type="evidence" value="ECO:0007669"/>
    <property type="project" value="UniProtKB-SubCell"/>
</dbReference>
<dbReference type="GO" id="GO:0031965">
    <property type="term" value="C:nuclear membrane"/>
    <property type="evidence" value="ECO:0007669"/>
    <property type="project" value="TreeGrafter"/>
</dbReference>
<dbReference type="GO" id="GO:0070628">
    <property type="term" value="F:proteasome binding"/>
    <property type="evidence" value="ECO:0007669"/>
    <property type="project" value="TreeGrafter"/>
</dbReference>
<dbReference type="GO" id="GO:0071630">
    <property type="term" value="P:nuclear protein quality control by the ubiquitin-proteasome system"/>
    <property type="evidence" value="ECO:0007669"/>
    <property type="project" value="InterPro"/>
</dbReference>
<dbReference type="GO" id="GO:0031144">
    <property type="term" value="P:proteasome localization"/>
    <property type="evidence" value="ECO:0007669"/>
    <property type="project" value="InterPro"/>
</dbReference>
<dbReference type="GO" id="GO:0015031">
    <property type="term" value="P:protein transport"/>
    <property type="evidence" value="ECO:0007669"/>
    <property type="project" value="UniProtKB-KW"/>
</dbReference>
<dbReference type="Gene3D" id="1.20.58.1590">
    <property type="entry name" value="Tethering factor for nuclear proteasome Cut8/Sts1"/>
    <property type="match status" value="1"/>
</dbReference>
<dbReference type="InterPro" id="IPR013868">
    <property type="entry name" value="Cut8/Sts1_fam"/>
</dbReference>
<dbReference type="InterPro" id="IPR038422">
    <property type="entry name" value="Cut8/Sts1_sf"/>
</dbReference>
<dbReference type="PANTHER" id="PTHR28032">
    <property type="entry name" value="FI02826P"/>
    <property type="match status" value="1"/>
</dbReference>
<dbReference type="PANTHER" id="PTHR28032:SF1">
    <property type="entry name" value="FI02826P"/>
    <property type="match status" value="1"/>
</dbReference>
<dbReference type="Pfam" id="PF08559">
    <property type="entry name" value="Cut8"/>
    <property type="match status" value="1"/>
</dbReference>
<gene>
    <name type="primary">STS1</name>
    <name type="ORF">CD36_09260</name>
</gene>
<evidence type="ECO:0000250" key="1"/>
<evidence type="ECO:0000256" key="2">
    <source>
        <dbReference type="SAM" id="MobiDB-lite"/>
    </source>
</evidence>
<evidence type="ECO:0000305" key="3"/>
<reference key="1">
    <citation type="journal article" date="2009" name="Genome Res.">
        <title>Comparative genomics of the fungal pathogens Candida dubliniensis and Candida albicans.</title>
        <authorList>
            <person name="Jackson A.P."/>
            <person name="Gamble J.A."/>
            <person name="Yeomans T."/>
            <person name="Moran G.P."/>
            <person name="Saunders D."/>
            <person name="Harris D."/>
            <person name="Aslett M."/>
            <person name="Barrell J.F."/>
            <person name="Butler G."/>
            <person name="Citiulo F."/>
            <person name="Coleman D.C."/>
            <person name="de Groot P.W.J."/>
            <person name="Goodwin T.J."/>
            <person name="Quail M.A."/>
            <person name="McQuillan J."/>
            <person name="Munro C.A."/>
            <person name="Pain A."/>
            <person name="Poulter R.T."/>
            <person name="Rajandream M.A."/>
            <person name="Renauld H."/>
            <person name="Spiering M.J."/>
            <person name="Tivey A."/>
            <person name="Gow N.A.R."/>
            <person name="Barrell B."/>
            <person name="Sullivan D.J."/>
            <person name="Berriman M."/>
        </authorList>
    </citation>
    <scope>NUCLEOTIDE SEQUENCE [LARGE SCALE GENOMIC DNA]</scope>
    <source>
        <strain>CD36 / ATCC MYA-646 / CBS 7987 / NCPF 3949 / NRRL Y-17841</strain>
    </source>
</reference>
<proteinExistence type="inferred from homology"/>
<name>STS1_CANDC</name>